<protein>
    <recommendedName>
        <fullName evidence="5">ATP-dependent rRNA helicase RRP3</fullName>
        <ecNumber evidence="1">3.6.4.13</ecNumber>
    </recommendedName>
</protein>
<keyword id="KW-0067">ATP-binding</keyword>
<keyword id="KW-0347">Helicase</keyword>
<keyword id="KW-0378">Hydrolase</keyword>
<keyword id="KW-0547">Nucleotide-binding</keyword>
<keyword id="KW-0539">Nucleus</keyword>
<keyword id="KW-1185">Reference proteome</keyword>
<keyword id="KW-0690">Ribosome biogenesis</keyword>
<keyword id="KW-0694">RNA-binding</keyword>
<keyword id="KW-0698">rRNA processing</keyword>
<dbReference type="EC" id="3.6.4.13" evidence="1"/>
<dbReference type="EMBL" id="CM001235">
    <property type="protein sequence ID" value="EHA49465.1"/>
    <property type="status" value="ALT_INIT"/>
    <property type="molecule type" value="Genomic_DNA"/>
</dbReference>
<dbReference type="RefSeq" id="XP_003719049.1">
    <property type="nucleotide sequence ID" value="XM_003719001.1"/>
</dbReference>
<dbReference type="SMR" id="A4RGD1"/>
<dbReference type="FunCoup" id="A4RGD1">
    <property type="interactions" value="1115"/>
</dbReference>
<dbReference type="STRING" id="242507.A4RGD1"/>
<dbReference type="GeneID" id="12985134"/>
<dbReference type="KEGG" id="mgr:MGG_17539"/>
<dbReference type="eggNOG" id="KOG0330">
    <property type="taxonomic scope" value="Eukaryota"/>
</dbReference>
<dbReference type="InParanoid" id="A4RGD1"/>
<dbReference type="OrthoDB" id="10261904at2759"/>
<dbReference type="Proteomes" id="UP000009058">
    <property type="component" value="Chromosome 5"/>
</dbReference>
<dbReference type="GO" id="GO:0005829">
    <property type="term" value="C:cytosol"/>
    <property type="evidence" value="ECO:0007669"/>
    <property type="project" value="TreeGrafter"/>
</dbReference>
<dbReference type="GO" id="GO:0005634">
    <property type="term" value="C:nucleus"/>
    <property type="evidence" value="ECO:0007669"/>
    <property type="project" value="UniProtKB-SubCell"/>
</dbReference>
<dbReference type="GO" id="GO:0005524">
    <property type="term" value="F:ATP binding"/>
    <property type="evidence" value="ECO:0007669"/>
    <property type="project" value="UniProtKB-KW"/>
</dbReference>
<dbReference type="GO" id="GO:0016887">
    <property type="term" value="F:ATP hydrolysis activity"/>
    <property type="evidence" value="ECO:0007669"/>
    <property type="project" value="RHEA"/>
</dbReference>
<dbReference type="GO" id="GO:0003723">
    <property type="term" value="F:RNA binding"/>
    <property type="evidence" value="ECO:0007669"/>
    <property type="project" value="UniProtKB-KW"/>
</dbReference>
<dbReference type="GO" id="GO:0003724">
    <property type="term" value="F:RNA helicase activity"/>
    <property type="evidence" value="ECO:0007669"/>
    <property type="project" value="UniProtKB-EC"/>
</dbReference>
<dbReference type="GO" id="GO:0006364">
    <property type="term" value="P:rRNA processing"/>
    <property type="evidence" value="ECO:0007669"/>
    <property type="project" value="UniProtKB-KW"/>
</dbReference>
<dbReference type="CDD" id="cd17954">
    <property type="entry name" value="DEADc_DDX47"/>
    <property type="match status" value="1"/>
</dbReference>
<dbReference type="CDD" id="cd18787">
    <property type="entry name" value="SF2_C_DEAD"/>
    <property type="match status" value="1"/>
</dbReference>
<dbReference type="Gene3D" id="3.40.50.300">
    <property type="entry name" value="P-loop containing nucleotide triphosphate hydrolases"/>
    <property type="match status" value="2"/>
</dbReference>
<dbReference type="InterPro" id="IPR044765">
    <property type="entry name" value="DDX47/Rrp3_DEADc"/>
</dbReference>
<dbReference type="InterPro" id="IPR011545">
    <property type="entry name" value="DEAD/DEAH_box_helicase_dom"/>
</dbReference>
<dbReference type="InterPro" id="IPR050079">
    <property type="entry name" value="DEAD_box_RNA_helicase"/>
</dbReference>
<dbReference type="InterPro" id="IPR014001">
    <property type="entry name" value="Helicase_ATP-bd"/>
</dbReference>
<dbReference type="InterPro" id="IPR001650">
    <property type="entry name" value="Helicase_C-like"/>
</dbReference>
<dbReference type="InterPro" id="IPR027417">
    <property type="entry name" value="P-loop_NTPase"/>
</dbReference>
<dbReference type="InterPro" id="IPR000629">
    <property type="entry name" value="RNA-helicase_DEAD-box_CS"/>
</dbReference>
<dbReference type="InterPro" id="IPR014014">
    <property type="entry name" value="RNA_helicase_DEAD_Q_motif"/>
</dbReference>
<dbReference type="PANTHER" id="PTHR47959">
    <property type="entry name" value="ATP-DEPENDENT RNA HELICASE RHLE-RELATED"/>
    <property type="match status" value="1"/>
</dbReference>
<dbReference type="PANTHER" id="PTHR47959:SF20">
    <property type="entry name" value="RNA HELICASE"/>
    <property type="match status" value="1"/>
</dbReference>
<dbReference type="Pfam" id="PF00270">
    <property type="entry name" value="DEAD"/>
    <property type="match status" value="1"/>
</dbReference>
<dbReference type="Pfam" id="PF00271">
    <property type="entry name" value="Helicase_C"/>
    <property type="match status" value="1"/>
</dbReference>
<dbReference type="SMART" id="SM00487">
    <property type="entry name" value="DEXDc"/>
    <property type="match status" value="1"/>
</dbReference>
<dbReference type="SMART" id="SM00490">
    <property type="entry name" value="HELICc"/>
    <property type="match status" value="1"/>
</dbReference>
<dbReference type="SUPFAM" id="SSF52540">
    <property type="entry name" value="P-loop containing nucleoside triphosphate hydrolases"/>
    <property type="match status" value="2"/>
</dbReference>
<dbReference type="PROSITE" id="PS00039">
    <property type="entry name" value="DEAD_ATP_HELICASE"/>
    <property type="match status" value="1"/>
</dbReference>
<dbReference type="PROSITE" id="PS51192">
    <property type="entry name" value="HELICASE_ATP_BIND_1"/>
    <property type="match status" value="1"/>
</dbReference>
<dbReference type="PROSITE" id="PS51194">
    <property type="entry name" value="HELICASE_CTER"/>
    <property type="match status" value="1"/>
</dbReference>
<dbReference type="PROSITE" id="PS51195">
    <property type="entry name" value="Q_MOTIF"/>
    <property type="match status" value="1"/>
</dbReference>
<organism>
    <name type="scientific">Pyricularia oryzae (strain 70-15 / ATCC MYA-4617 / FGSC 8958)</name>
    <name type="common">Rice blast fungus</name>
    <name type="synonym">Magnaporthe oryzae</name>
    <dbReference type="NCBI Taxonomy" id="242507"/>
    <lineage>
        <taxon>Eukaryota</taxon>
        <taxon>Fungi</taxon>
        <taxon>Dikarya</taxon>
        <taxon>Ascomycota</taxon>
        <taxon>Pezizomycotina</taxon>
        <taxon>Sordariomycetes</taxon>
        <taxon>Sordariomycetidae</taxon>
        <taxon>Magnaporthales</taxon>
        <taxon>Pyriculariaceae</taxon>
        <taxon>Pyricularia</taxon>
    </lineage>
</organism>
<accession>A4RGD1</accession>
<accession>G4NEI8</accession>
<proteinExistence type="inferred from homology"/>
<reference key="1">
    <citation type="journal article" date="2005" name="Nature">
        <title>The genome sequence of the rice blast fungus Magnaporthe grisea.</title>
        <authorList>
            <person name="Dean R.A."/>
            <person name="Talbot N.J."/>
            <person name="Ebbole D.J."/>
            <person name="Farman M.L."/>
            <person name="Mitchell T.K."/>
            <person name="Orbach M.J."/>
            <person name="Thon M.R."/>
            <person name="Kulkarni R."/>
            <person name="Xu J.-R."/>
            <person name="Pan H."/>
            <person name="Read N.D."/>
            <person name="Lee Y.-H."/>
            <person name="Carbone I."/>
            <person name="Brown D."/>
            <person name="Oh Y.Y."/>
            <person name="Donofrio N."/>
            <person name="Jeong J.S."/>
            <person name="Soanes D.M."/>
            <person name="Djonovic S."/>
            <person name="Kolomiets E."/>
            <person name="Rehmeyer C."/>
            <person name="Li W."/>
            <person name="Harding M."/>
            <person name="Kim S."/>
            <person name="Lebrun M.-H."/>
            <person name="Bohnert H."/>
            <person name="Coughlan S."/>
            <person name="Butler J."/>
            <person name="Calvo S.E."/>
            <person name="Ma L.-J."/>
            <person name="Nicol R."/>
            <person name="Purcell S."/>
            <person name="Nusbaum C."/>
            <person name="Galagan J.E."/>
            <person name="Birren B.W."/>
        </authorList>
    </citation>
    <scope>NUCLEOTIDE SEQUENCE [LARGE SCALE GENOMIC DNA]</scope>
    <source>
        <strain>70-15 / ATCC MYA-4617 / FGSC 8958</strain>
    </source>
</reference>
<name>RRP3_PYRO7</name>
<gene>
    <name evidence="1" type="primary">RRP3</name>
    <name type="ORF">MGG_17539</name>
</gene>
<feature type="chain" id="PRO_0000294652" description="ATP-dependent rRNA helicase RRP3">
    <location>
        <begin position="1"/>
        <end position="538"/>
    </location>
</feature>
<feature type="domain" description="Helicase ATP-binding" evidence="2">
    <location>
        <begin position="141"/>
        <end position="312"/>
    </location>
</feature>
<feature type="domain" description="Helicase C-terminal" evidence="3">
    <location>
        <begin position="336"/>
        <end position="486"/>
    </location>
</feature>
<feature type="region of interest" description="Disordered" evidence="4">
    <location>
        <begin position="1"/>
        <end position="112"/>
    </location>
</feature>
<feature type="region of interest" description="Disordered" evidence="4">
    <location>
        <begin position="498"/>
        <end position="538"/>
    </location>
</feature>
<feature type="short sequence motif" description="Q motif" evidence="5">
    <location>
        <begin position="110"/>
        <end position="138"/>
    </location>
</feature>
<feature type="short sequence motif" description="DEAD box" evidence="5">
    <location>
        <begin position="260"/>
        <end position="263"/>
    </location>
</feature>
<feature type="compositionally biased region" description="Basic residues" evidence="4">
    <location>
        <begin position="1"/>
        <end position="11"/>
    </location>
</feature>
<feature type="compositionally biased region" description="Low complexity" evidence="4">
    <location>
        <begin position="34"/>
        <end position="47"/>
    </location>
</feature>
<feature type="compositionally biased region" description="Acidic residues" evidence="4">
    <location>
        <begin position="53"/>
        <end position="85"/>
    </location>
</feature>
<feature type="compositionally biased region" description="Basic and acidic residues" evidence="4">
    <location>
        <begin position="92"/>
        <end position="112"/>
    </location>
</feature>
<feature type="compositionally biased region" description="Basic and acidic residues" evidence="4">
    <location>
        <begin position="498"/>
        <end position="512"/>
    </location>
</feature>
<feature type="compositionally biased region" description="Basic residues" evidence="4">
    <location>
        <begin position="513"/>
        <end position="528"/>
    </location>
</feature>
<feature type="binding site" evidence="2">
    <location>
        <begin position="154"/>
        <end position="161"/>
    </location>
    <ligand>
        <name>ATP</name>
        <dbReference type="ChEBI" id="CHEBI:30616"/>
    </ligand>
</feature>
<sequence length="538" mass="59474">MSSAKRVKLSHSKAPGPFRKPSSGDRAAAKVLTKKITQAPKAAAPIKQKAREAEEDDDDDDKDDKDEEDEEQNDDSSDEASENDDSTPTVEEATKEGQTELPSKEETPTKSFRDLGIVEPLCEACEALKFKKPTPIQEQAIPLALQGRDVIGIAETGSGKTAAFALPILQSLLEKPQPLFGLVLAPTRELAAQIGQTFEALGASISLRCAVVVGGLDMVSQSTALGKKPHIVVATPGRLLDHLEKTKGFSLRSLKFLVMDEADRLLDLDFGPILDKILKFLPRERRTFLFSATMSSKVESLQRASLRDPLKVSVSSSQEKTVSTLIQNPLFIPHKHKDVYLIYLANEFAGKTTIVFTRTVNEAQRVSILLRTLSFGAIPLHGQLSQSMRLGALNKFKARSRDILVATDVAARGLDIPEVDLVINFDMPQDSMTYIHRVGRTARAGRSGRAISIITQYDLELWLRIEKAALNGRKLPLFQPDKEEVMVFKERVEEAQRHAREEMKALHEDRGKKGAVLKGRKRGSATKRRHDDMDAEEG</sequence>
<comment type="function">
    <text evidence="1">ATP-dependent rRNA helicase required for pre-ribosomal RNA processing. Involved in the maturation of the 35S-pre-rRNA and to its cleavage to mature 18S rRNA.</text>
</comment>
<comment type="catalytic activity">
    <reaction evidence="1">
        <text>ATP + H2O = ADP + phosphate + H(+)</text>
        <dbReference type="Rhea" id="RHEA:13065"/>
        <dbReference type="ChEBI" id="CHEBI:15377"/>
        <dbReference type="ChEBI" id="CHEBI:15378"/>
        <dbReference type="ChEBI" id="CHEBI:30616"/>
        <dbReference type="ChEBI" id="CHEBI:43474"/>
        <dbReference type="ChEBI" id="CHEBI:456216"/>
        <dbReference type="EC" id="3.6.4.13"/>
    </reaction>
</comment>
<comment type="subunit">
    <text evidence="1">Interacts with the SSU processome.</text>
</comment>
<comment type="subcellular location">
    <subcellularLocation>
        <location evidence="5">Nucleus</location>
    </subcellularLocation>
</comment>
<comment type="domain">
    <text evidence="5">The Q motif is unique to and characteristic of the DEAD box family of RNA helicases and controls ATP binding and hydrolysis.</text>
</comment>
<comment type="similarity">
    <text evidence="5">Belongs to the DEAD box helicase family. DDX47/RRP3 subfamily.</text>
</comment>
<comment type="sequence caution" evidence="5">
    <conflict type="erroneous initiation">
        <sequence resource="EMBL-CDS" id="EHA49465"/>
    </conflict>
    <text>Extended N-terminus.</text>
</comment>
<evidence type="ECO:0000250" key="1">
    <source>
        <dbReference type="UniProtKB" id="P38712"/>
    </source>
</evidence>
<evidence type="ECO:0000255" key="2">
    <source>
        <dbReference type="PROSITE-ProRule" id="PRU00541"/>
    </source>
</evidence>
<evidence type="ECO:0000255" key="3">
    <source>
        <dbReference type="PROSITE-ProRule" id="PRU00542"/>
    </source>
</evidence>
<evidence type="ECO:0000256" key="4">
    <source>
        <dbReference type="SAM" id="MobiDB-lite"/>
    </source>
</evidence>
<evidence type="ECO:0000305" key="5"/>